<protein>
    <recommendedName>
        <fullName evidence="1">Methylthioribose kinase</fullName>
        <shortName evidence="1">MTR kinase</shortName>
        <ecNumber evidence="1">2.7.1.100</ecNumber>
    </recommendedName>
</protein>
<name>MTNK_GEOKA</name>
<reference key="1">
    <citation type="journal article" date="2004" name="Nucleic Acids Res.">
        <title>Thermoadaptation trait revealed by the genome sequence of thermophilic Geobacillus kaustophilus.</title>
        <authorList>
            <person name="Takami H."/>
            <person name="Takaki Y."/>
            <person name="Chee G.-J."/>
            <person name="Nishi S."/>
            <person name="Shimamura S."/>
            <person name="Suzuki H."/>
            <person name="Matsui S."/>
            <person name="Uchiyama I."/>
        </authorList>
    </citation>
    <scope>NUCLEOTIDE SEQUENCE [LARGE SCALE GENOMIC DNA]</scope>
    <source>
        <strain>HTA426</strain>
    </source>
</reference>
<proteinExistence type="inferred from homology"/>
<accession>Q5L1E5</accession>
<sequence length="396" mass="44982">MTTVQTSVYEPLTEPKAVALAVRLGLFRDGTPLACREIGDGNLNLVFHIVDQETKQGVIIKQALPYAKVVGESWPLTLKRAVIESNALRTFASYVPQYVPKVYYSDESLAITVMEDLSRLQIARKGLIEGKTYPLLSQHIGEFVAKTAFYTSDFGMNQQEKKKLAQSFVNPELCKITEDLVFTDPFFDHETNNFEDELRPDVEALWRDDRLHLEAAKLKRKFLTEADVLLHGDLHTGSIFVSADETKVIDPEFAFYGPIGFDLGQFFANLLLNALSRSELERQPLFDHIDRTWDVFASVFSNLWRTESVETYAATPGLLEDVLRHAFIDAVGFAGCEVIRRTIGLAHVADLDGIEHKDERLVAKRHALRLGRRLIIERRVFTGTEDFRRLFAETEQ</sequence>
<feature type="chain" id="PRO_0000357344" description="Methylthioribose kinase">
    <location>
        <begin position="1"/>
        <end position="396"/>
    </location>
</feature>
<feature type="binding site" evidence="1">
    <location>
        <position position="44"/>
    </location>
    <ligand>
        <name>ATP</name>
        <dbReference type="ChEBI" id="CHEBI:30616"/>
    </ligand>
</feature>
<feature type="binding site" evidence="1">
    <location>
        <position position="61"/>
    </location>
    <ligand>
        <name>ATP</name>
        <dbReference type="ChEBI" id="CHEBI:30616"/>
    </ligand>
</feature>
<feature type="binding site" evidence="1">
    <location>
        <begin position="115"/>
        <end position="117"/>
    </location>
    <ligand>
        <name>ATP</name>
        <dbReference type="ChEBI" id="CHEBI:30616"/>
    </ligand>
</feature>
<feature type="binding site" evidence="1">
    <location>
        <position position="233"/>
    </location>
    <ligand>
        <name>substrate</name>
    </ligand>
</feature>
<feature type="binding site" evidence="1">
    <location>
        <begin position="250"/>
        <end position="252"/>
    </location>
    <ligand>
        <name>ATP</name>
        <dbReference type="ChEBI" id="CHEBI:30616"/>
    </ligand>
</feature>
<feature type="binding site" evidence="1">
    <location>
        <position position="340"/>
    </location>
    <ligand>
        <name>substrate</name>
    </ligand>
</feature>
<keyword id="KW-0028">Amino-acid biosynthesis</keyword>
<keyword id="KW-0067">ATP-binding</keyword>
<keyword id="KW-0418">Kinase</keyword>
<keyword id="KW-0486">Methionine biosynthesis</keyword>
<keyword id="KW-0547">Nucleotide-binding</keyword>
<keyword id="KW-1185">Reference proteome</keyword>
<keyword id="KW-0808">Transferase</keyword>
<evidence type="ECO:0000255" key="1">
    <source>
        <dbReference type="HAMAP-Rule" id="MF_01683"/>
    </source>
</evidence>
<dbReference type="EC" id="2.7.1.100" evidence="1"/>
<dbReference type="EMBL" id="BA000043">
    <property type="protein sequence ID" value="BAD75235.1"/>
    <property type="molecule type" value="Genomic_DNA"/>
</dbReference>
<dbReference type="RefSeq" id="WP_011230451.1">
    <property type="nucleotide sequence ID" value="NC_006510.1"/>
</dbReference>
<dbReference type="SMR" id="Q5L1E5"/>
<dbReference type="STRING" id="235909.GK0950"/>
<dbReference type="KEGG" id="gka:GK0950"/>
<dbReference type="PATRIC" id="fig|235909.7.peg.1038"/>
<dbReference type="eggNOG" id="COG4857">
    <property type="taxonomic scope" value="Bacteria"/>
</dbReference>
<dbReference type="HOGENOM" id="CLU_033681_0_0_9"/>
<dbReference type="UniPathway" id="UPA00904">
    <property type="reaction ID" value="UER00872"/>
</dbReference>
<dbReference type="Proteomes" id="UP000001172">
    <property type="component" value="Chromosome"/>
</dbReference>
<dbReference type="GO" id="GO:0005524">
    <property type="term" value="F:ATP binding"/>
    <property type="evidence" value="ECO:0007669"/>
    <property type="project" value="UniProtKB-UniRule"/>
</dbReference>
<dbReference type="GO" id="GO:0046522">
    <property type="term" value="F:S-methyl-5-thioribose kinase activity"/>
    <property type="evidence" value="ECO:0007669"/>
    <property type="project" value="UniProtKB-UniRule"/>
</dbReference>
<dbReference type="GO" id="GO:0019509">
    <property type="term" value="P:L-methionine salvage from methylthioadenosine"/>
    <property type="evidence" value="ECO:0007669"/>
    <property type="project" value="UniProtKB-UniRule"/>
</dbReference>
<dbReference type="Gene3D" id="3.90.1200.10">
    <property type="match status" value="1"/>
</dbReference>
<dbReference type="Gene3D" id="3.30.200.20">
    <property type="entry name" value="Phosphorylase Kinase, domain 1"/>
    <property type="match status" value="1"/>
</dbReference>
<dbReference type="HAMAP" id="MF_01683">
    <property type="entry name" value="Salvage_MtnK"/>
    <property type="match status" value="1"/>
</dbReference>
<dbReference type="InterPro" id="IPR002575">
    <property type="entry name" value="Aminoglycoside_PTrfase"/>
</dbReference>
<dbReference type="InterPro" id="IPR011009">
    <property type="entry name" value="Kinase-like_dom_sf"/>
</dbReference>
<dbReference type="InterPro" id="IPR009212">
    <property type="entry name" value="Methylthioribose_kinase"/>
</dbReference>
<dbReference type="NCBIfam" id="TIGR01767">
    <property type="entry name" value="MTRK"/>
    <property type="match status" value="1"/>
</dbReference>
<dbReference type="PANTHER" id="PTHR34273">
    <property type="entry name" value="METHYLTHIORIBOSE KINASE"/>
    <property type="match status" value="1"/>
</dbReference>
<dbReference type="PANTHER" id="PTHR34273:SF2">
    <property type="entry name" value="METHYLTHIORIBOSE KINASE"/>
    <property type="match status" value="1"/>
</dbReference>
<dbReference type="Pfam" id="PF01636">
    <property type="entry name" value="APH"/>
    <property type="match status" value="1"/>
</dbReference>
<dbReference type="PIRSF" id="PIRSF031134">
    <property type="entry name" value="MTRK"/>
    <property type="match status" value="1"/>
</dbReference>
<dbReference type="SUPFAM" id="SSF56112">
    <property type="entry name" value="Protein kinase-like (PK-like)"/>
    <property type="match status" value="1"/>
</dbReference>
<comment type="function">
    <text evidence="1">Catalyzes the phosphorylation of methylthioribose into methylthioribose-1-phosphate.</text>
</comment>
<comment type="catalytic activity">
    <reaction evidence="1">
        <text>5-(methylsulfanyl)-D-ribose + ATP = 5-(methylsulfanyl)-alpha-D-ribose 1-phosphate + ADP + H(+)</text>
        <dbReference type="Rhea" id="RHEA:22312"/>
        <dbReference type="ChEBI" id="CHEBI:15378"/>
        <dbReference type="ChEBI" id="CHEBI:30616"/>
        <dbReference type="ChEBI" id="CHEBI:58533"/>
        <dbReference type="ChEBI" id="CHEBI:78440"/>
        <dbReference type="ChEBI" id="CHEBI:456216"/>
        <dbReference type="EC" id="2.7.1.100"/>
    </reaction>
</comment>
<comment type="pathway">
    <text evidence="1">Amino-acid biosynthesis; L-methionine biosynthesis via salvage pathway; S-methyl-5-thio-alpha-D-ribose 1-phosphate from S-methyl-5'-thioadenosine (hydrolase route): step 2/2.</text>
</comment>
<comment type="subunit">
    <text evidence="1">Homodimer.</text>
</comment>
<comment type="similarity">
    <text evidence="1">Belongs to the methylthioribose kinase family.</text>
</comment>
<organism>
    <name type="scientific">Geobacillus kaustophilus (strain HTA426)</name>
    <dbReference type="NCBI Taxonomy" id="235909"/>
    <lineage>
        <taxon>Bacteria</taxon>
        <taxon>Bacillati</taxon>
        <taxon>Bacillota</taxon>
        <taxon>Bacilli</taxon>
        <taxon>Bacillales</taxon>
        <taxon>Anoxybacillaceae</taxon>
        <taxon>Geobacillus</taxon>
        <taxon>Geobacillus thermoleovorans group</taxon>
    </lineage>
</organism>
<gene>
    <name evidence="1" type="primary">mtnK</name>
    <name type="ordered locus">GK0950</name>
</gene>